<sequence>MSVDQTLYSRTPAAMADPTCAGPAAFTAAGAFSQPDLMAFSLREEEPIWGFDTIAPSMASWQGKMEQQTFCNPNMERGLKNTHVRNGQPTPPPFDDKKLQTPMGEMYPVAQYAFNSSPPEYAPPKHRSSLSEQSQTDGYGVSTRRRKASAIDQCEQQQEREKREKFLERNRLAASKCRQKKKEHTKLLETRFREVSNKKGELESEIEHLRSEVLNLKNEMLRHAQCGDEAIKIHLAQMVRLITSKDTPNRDLVSPMRSPEQMAASTPHGLSFGFDGPMQLPSEMGSPLDQRRDSEQSIMTESSYTFSTDDSFEELINV</sequence>
<feature type="chain" id="PRO_0000444005" description="Basic leucine zipper (bZIP) transcription factor atfB">
    <location>
        <begin position="1"/>
        <end position="318"/>
    </location>
</feature>
<feature type="domain" description="bZIP" evidence="2">
    <location>
        <begin position="160"/>
        <end position="223"/>
    </location>
</feature>
<feature type="region of interest" description="Disordered" evidence="3">
    <location>
        <begin position="114"/>
        <end position="157"/>
    </location>
</feature>
<feature type="region of interest" description="Basic motif" evidence="2">
    <location>
        <begin position="160"/>
        <end position="199"/>
    </location>
</feature>
<feature type="region of interest" description="Leucine-zipper" evidence="2">
    <location>
        <begin position="202"/>
        <end position="216"/>
    </location>
</feature>
<feature type="region of interest" description="Disordered" evidence="3">
    <location>
        <begin position="275"/>
        <end position="301"/>
    </location>
</feature>
<keyword id="KW-0238">DNA-binding</keyword>
<keyword id="KW-0539">Nucleus</keyword>
<keyword id="KW-0346">Stress response</keyword>
<keyword id="KW-0804">Transcription</keyword>
<keyword id="KW-0805">Transcription regulation</keyword>
<dbReference type="EMBL" id="EQ963480">
    <property type="protein sequence ID" value="EED49320.1"/>
    <property type="molecule type" value="Genomic_DNA"/>
</dbReference>
<dbReference type="RefSeq" id="XP_002381221.1">
    <property type="nucleotide sequence ID" value="XM_002381180.1"/>
</dbReference>
<dbReference type="SMR" id="B8NLU5"/>
<dbReference type="STRING" id="332952.B8NLU5"/>
<dbReference type="EnsemblFungi" id="EED49320">
    <property type="protein sequence ID" value="EED49320"/>
    <property type="gene ID" value="AFLA_094010"/>
</dbReference>
<dbReference type="VEuPathDB" id="FungiDB:AFLA_009637"/>
<dbReference type="eggNOG" id="KOG1414">
    <property type="taxonomic scope" value="Eukaryota"/>
</dbReference>
<dbReference type="HOGENOM" id="CLU_888511_0_0_1"/>
<dbReference type="OMA" id="KHAQCGD"/>
<dbReference type="PHI-base" id="PHI:123097"/>
<dbReference type="GO" id="GO:0005634">
    <property type="term" value="C:nucleus"/>
    <property type="evidence" value="ECO:0007669"/>
    <property type="project" value="UniProtKB-SubCell"/>
</dbReference>
<dbReference type="GO" id="GO:0003677">
    <property type="term" value="F:DNA binding"/>
    <property type="evidence" value="ECO:0007669"/>
    <property type="project" value="UniProtKB-KW"/>
</dbReference>
<dbReference type="GO" id="GO:0003700">
    <property type="term" value="F:DNA-binding transcription factor activity"/>
    <property type="evidence" value="ECO:0007669"/>
    <property type="project" value="InterPro"/>
</dbReference>
<dbReference type="CDD" id="cd14687">
    <property type="entry name" value="bZIP_ATF2"/>
    <property type="match status" value="1"/>
</dbReference>
<dbReference type="FunFam" id="1.20.5.170:FF:000053">
    <property type="entry name" value="BZIP transcription factor AtfA"/>
    <property type="match status" value="1"/>
</dbReference>
<dbReference type="Gene3D" id="1.20.5.170">
    <property type="match status" value="1"/>
</dbReference>
<dbReference type="InterPro" id="IPR004827">
    <property type="entry name" value="bZIP"/>
</dbReference>
<dbReference type="InterPro" id="IPR046347">
    <property type="entry name" value="bZIP_sf"/>
</dbReference>
<dbReference type="InterPro" id="IPR051027">
    <property type="entry name" value="bZIP_transcription_factors"/>
</dbReference>
<dbReference type="PANTHER" id="PTHR19304">
    <property type="entry name" value="CYCLIC-AMP RESPONSE ELEMENT BINDING PROTEIN"/>
    <property type="match status" value="1"/>
</dbReference>
<dbReference type="Pfam" id="PF00170">
    <property type="entry name" value="bZIP_1"/>
    <property type="match status" value="1"/>
</dbReference>
<dbReference type="SMART" id="SM00338">
    <property type="entry name" value="BRLZ"/>
    <property type="match status" value="1"/>
</dbReference>
<dbReference type="SUPFAM" id="SSF57959">
    <property type="entry name" value="Leucine zipper domain"/>
    <property type="match status" value="1"/>
</dbReference>
<dbReference type="PROSITE" id="PS50217">
    <property type="entry name" value="BZIP"/>
    <property type="match status" value="1"/>
</dbReference>
<dbReference type="PROSITE" id="PS00036">
    <property type="entry name" value="BZIP_BASIC"/>
    <property type="match status" value="1"/>
</dbReference>
<accession>B8NLU5</accession>
<proteinExistence type="evidence at protein level"/>
<evidence type="ECO:0000250" key="1">
    <source>
        <dbReference type="UniProtKB" id="A0A0F0IP79"/>
    </source>
</evidence>
<evidence type="ECO:0000255" key="2">
    <source>
        <dbReference type="PROSITE-ProRule" id="PRU00978"/>
    </source>
</evidence>
<evidence type="ECO:0000256" key="3">
    <source>
        <dbReference type="SAM" id="MobiDB-lite"/>
    </source>
</evidence>
<evidence type="ECO:0000269" key="4">
    <source>
    </source>
</evidence>
<evidence type="ECO:0000269" key="5">
    <source>
    </source>
</evidence>
<evidence type="ECO:0000303" key="6">
    <source>
    </source>
</evidence>
<evidence type="ECO:0000305" key="7"/>
<evidence type="ECO:0000305" key="8">
    <source>
    </source>
</evidence>
<name>ATFB_ASPFN</name>
<reference key="1">
    <citation type="journal article" date="2015" name="Genome Announc.">
        <title>Genome sequence of Aspergillus flavus NRRL 3357, a strain that causes aflatoxin contamination of food and feed.</title>
        <authorList>
            <person name="Nierman W.C."/>
            <person name="Yu J."/>
            <person name="Fedorova-Abrams N.D."/>
            <person name="Losada L."/>
            <person name="Cleveland T.E."/>
            <person name="Bhatnagar D."/>
            <person name="Bennett J.W."/>
            <person name="Dean R."/>
            <person name="Payne G.A."/>
        </authorList>
    </citation>
    <scope>NUCLEOTIDE SEQUENCE [LARGE SCALE GENOMIC DNA]</scope>
    <source>
        <strain>ATCC 200026 / FGSC A1120 / IAM 13836 / NRRL 3357 / JCM 12722 / SRRC 167</strain>
    </source>
</reference>
<reference key="2">
    <citation type="journal article" date="2014" name="Eukaryot. Cell">
        <title>VeA is associated with the response to oxidative stress in the aflatoxin producer Aspergillus flavus.</title>
        <authorList>
            <person name="Baidya S."/>
            <person name="Duran R.M."/>
            <person name="Lohmar J.M."/>
            <person name="Harris-Coward P.Y."/>
            <person name="Cary J.W."/>
            <person name="Hong S.Y."/>
            <person name="Roze L.V."/>
            <person name="Linz J.E."/>
            <person name="Calvo A.M."/>
        </authorList>
    </citation>
    <scope>INDUCTION</scope>
    <scope>FUNCTION</scope>
    <scope>DNA-BINDING</scope>
</reference>
<reference key="3">
    <citation type="journal article" date="2017" name="Fungal Genet. Biol.">
        <title>Piperine inhibits aflatoxin B1 production in Aspergillus flavus by modulating fungal oxidative stress response.</title>
        <authorList>
            <person name="Caceres I."/>
            <person name="El Khoury R."/>
            <person name="Bailly S."/>
            <person name="Oswald I.P."/>
            <person name="Puel O."/>
            <person name="Bailly J.D."/>
        </authorList>
    </citation>
    <scope>FUNCTION</scope>
    <scope>INDUCTION</scope>
</reference>
<organism>
    <name type="scientific">Aspergillus flavus (strain ATCC 200026 / FGSC A1120 / IAM 13836 / NRRL 3357 / JCM 12722 / SRRC 167)</name>
    <dbReference type="NCBI Taxonomy" id="332952"/>
    <lineage>
        <taxon>Eukaryota</taxon>
        <taxon>Fungi</taxon>
        <taxon>Dikarya</taxon>
        <taxon>Ascomycota</taxon>
        <taxon>Pezizomycotina</taxon>
        <taxon>Eurotiomycetes</taxon>
        <taxon>Eurotiomycetidae</taxon>
        <taxon>Eurotiales</taxon>
        <taxon>Aspergillaceae</taxon>
        <taxon>Aspergillus</taxon>
        <taxon>Aspergillus subgen. Circumdati</taxon>
    </lineage>
</organism>
<protein>
    <recommendedName>
        <fullName evidence="6">Basic leucine zipper (bZIP) transcription factor atfB</fullName>
    </recommendedName>
</protein>
<gene>
    <name evidence="6" type="primary">atfB</name>
    <name type="ORF">AFLA_094010</name>
</gene>
<comment type="function">
    <text evidence="1 4 8">Transcription factor that acts as a key player in the regulatory circuit that integrates secondary metabolism and cellular response to oxidative stress (By similarity). Regulates the genes involved in development and stress response through direct binding to their promoters (PubMed:24951443, PubMed:28830793).</text>
</comment>
<comment type="subcellular location">
    <subcellularLocation>
        <location evidence="2">Nucleus</location>
    </subcellularLocation>
</comment>
<comment type="induction">
    <text evidence="4 5">Expression is positively regulated by the developmental and secondary metabolism regulator veA (PubMed:24951443). Expression is highly increased following piperine exposure (PubMed:28830793).</text>
</comment>
<comment type="similarity">
    <text evidence="7">Belongs to the bZIP family. ATF subfamily.</text>
</comment>